<feature type="chain" id="PRO_0000462555" description="Mitogen-activated protein kinase spm1">
    <location>
        <begin position="1"/>
        <end position="419"/>
    </location>
</feature>
<feature type="domain" description="Protein kinase" evidence="1">
    <location>
        <begin position="23"/>
        <end position="314"/>
    </location>
</feature>
<feature type="active site" description="Proton acceptor" evidence="1">
    <location>
        <position position="149"/>
    </location>
</feature>
<feature type="binding site" evidence="1">
    <location>
        <begin position="29"/>
        <end position="37"/>
    </location>
    <ligand>
        <name>ATP</name>
        <dbReference type="ChEBI" id="CHEBI:30616"/>
    </ligand>
</feature>
<feature type="binding site" evidence="1">
    <location>
        <position position="52"/>
    </location>
    <ligand>
        <name>ATP</name>
        <dbReference type="ChEBI" id="CHEBI:30616"/>
    </ligand>
</feature>
<proteinExistence type="evidence at protein level"/>
<reference key="1">
    <citation type="journal article" date="2015" name="New Phytol.">
        <title>Genome sequence of Valsa canker pathogens uncovers a potential adaptation of colonization of woody bark.</title>
        <authorList>
            <person name="Yin Z."/>
            <person name="Liu H."/>
            <person name="Li Z."/>
            <person name="Ke X."/>
            <person name="Dou D."/>
            <person name="Gao X."/>
            <person name="Song N."/>
            <person name="Dai Q."/>
            <person name="Wu Y."/>
            <person name="Xu J.R."/>
            <person name="Kang Z."/>
            <person name="Huang L."/>
        </authorList>
    </citation>
    <scope>NUCLEOTIDE SEQUENCE [LARGE SCALE GENOMIC DNA]</scope>
    <source>
        <strain>03-8</strain>
        <strain>SXYL134</strain>
    </source>
</reference>
<reference key="2">
    <citation type="journal article" date="2025" name="Microb. Pathog.">
        <title>Mitogen-activated protein (MAP) kinase signalling pathway VmMkh1-VmMkk1-VmSpm1 regulates cell wall integrity in Valsamali.</title>
        <authorList>
            <person name="Diao Y."/>
            <person name="Xiong X."/>
            <person name="Jin J."/>
            <person name="Yu C."/>
            <person name="Tian Y."/>
            <person name="Zhao C."/>
            <person name="Wu Y."/>
            <person name="Liu H."/>
        </authorList>
    </citation>
    <scope>FUNCTION</scope>
    <scope>DISRUPTION PHENOTYPE</scope>
    <scope>PHOSPHORYLATION</scope>
</reference>
<sequence length="419" mass="47367">MADLQGRKVFKVFNQDFIVDERYTVTKELGQGAYGIVCAAVNNQTNEGVAIKKVTNVFSKKILAKRALREIKLLQHFRGHRNITCLYDMDIPRPDNFNETYLYEELMECDLAAIIRSGQPLTDAHFQSFIYQILCGLKYIHSANVLHRDLKPGNLLVNADCELKICDFGLARGFSIDPEENAGYMTEYVATRWYRAPEIMLSFQSYTKAIDVWSVGCILAELLGGRPFFKGRDYVDQLNQILHILGTPNEETLSRIGSPRAQEYVRNLPFMPKKPFAALFPNANPDALDLLDRMLAFDPSSRISVEEALEHPYLQIWHDASDEPDCPTTFNFDFEIVEDVGDMRKMILEEVFRFRQVVRTVAGENGGQQAGQQPGAGQVPMPSGGQGQWRTEDPRPEEYMGHNANGLEGELALGADGRR</sequence>
<gene>
    <name evidence="4" type="primary">spm1</name>
    <name type="ORF">VM1G_09744</name>
    <name type="ORF">VP1G_05846</name>
</gene>
<evidence type="ECO:0000255" key="1">
    <source>
        <dbReference type="PROSITE-ProRule" id="PRU00159"/>
    </source>
</evidence>
<evidence type="ECO:0000255" key="2">
    <source>
        <dbReference type="RuleBase" id="RU361165"/>
    </source>
</evidence>
<evidence type="ECO:0000269" key="3">
    <source>
    </source>
</evidence>
<evidence type="ECO:0000303" key="4">
    <source>
    </source>
</evidence>
<evidence type="ECO:0000305" key="5"/>
<evidence type="ECO:0000305" key="6">
    <source>
    </source>
</evidence>
<organism>
    <name type="scientific">Cytospora mali</name>
    <name type="common">Apple Valsa canker fungus</name>
    <name type="synonym">Valsa mali</name>
    <dbReference type="NCBI Taxonomy" id="578113"/>
    <lineage>
        <taxon>Eukaryota</taxon>
        <taxon>Fungi</taxon>
        <taxon>Dikarya</taxon>
        <taxon>Ascomycota</taxon>
        <taxon>Pezizomycotina</taxon>
        <taxon>Sordariomycetes</taxon>
        <taxon>Sordariomycetidae</taxon>
        <taxon>Diaporthales</taxon>
        <taxon>Cytosporaceae</taxon>
        <taxon>Cytospora</taxon>
    </lineage>
</organism>
<accession>A0A194WDG1</accession>
<accession>A0A194V3I5</accession>
<dbReference type="EC" id="2.7.11.24" evidence="6"/>
<dbReference type="EMBL" id="CM003109">
    <property type="protein sequence ID" value="KUI74436.1"/>
    <property type="molecule type" value="Genomic_DNA"/>
</dbReference>
<dbReference type="EMBL" id="KN714715">
    <property type="protein sequence ID" value="KUI58525.1"/>
    <property type="molecule type" value="Genomic_DNA"/>
</dbReference>
<dbReference type="SMR" id="A0A194WDG1"/>
<dbReference type="OrthoDB" id="254066at147550"/>
<dbReference type="Proteomes" id="UP000078559">
    <property type="component" value="Chromosome 12"/>
</dbReference>
<dbReference type="Proteomes" id="UP000078576">
    <property type="component" value="Unassembled WGS sequence"/>
</dbReference>
<dbReference type="GO" id="GO:0005737">
    <property type="term" value="C:cytoplasm"/>
    <property type="evidence" value="ECO:0007669"/>
    <property type="project" value="EnsemblFungi"/>
</dbReference>
<dbReference type="GO" id="GO:0005634">
    <property type="term" value="C:nucleus"/>
    <property type="evidence" value="ECO:0007669"/>
    <property type="project" value="EnsemblFungi"/>
</dbReference>
<dbReference type="GO" id="GO:0005524">
    <property type="term" value="F:ATP binding"/>
    <property type="evidence" value="ECO:0007669"/>
    <property type="project" value="UniProtKB-UniRule"/>
</dbReference>
<dbReference type="GO" id="GO:0004707">
    <property type="term" value="F:MAP kinase activity"/>
    <property type="evidence" value="ECO:0007669"/>
    <property type="project" value="UniProtKB-EC"/>
</dbReference>
<dbReference type="GO" id="GO:0106310">
    <property type="term" value="F:protein serine kinase activity"/>
    <property type="evidence" value="ECO:0007669"/>
    <property type="project" value="RHEA"/>
</dbReference>
<dbReference type="GO" id="GO:0000196">
    <property type="term" value="P:cell integrity MAPK cascade"/>
    <property type="evidence" value="ECO:0007669"/>
    <property type="project" value="EnsemblFungi"/>
</dbReference>
<dbReference type="GO" id="GO:1902660">
    <property type="term" value="P:negative regulation of glucose mediated signaling pathway"/>
    <property type="evidence" value="ECO:0007669"/>
    <property type="project" value="EnsemblFungi"/>
</dbReference>
<dbReference type="GO" id="GO:1902413">
    <property type="term" value="P:negative regulation of mitotic cytokinesis"/>
    <property type="evidence" value="ECO:0007669"/>
    <property type="project" value="EnsemblFungi"/>
</dbReference>
<dbReference type="GO" id="GO:1905665">
    <property type="term" value="P:positive regulation of calcium ion import across plasma membrane"/>
    <property type="evidence" value="ECO:0007669"/>
    <property type="project" value="EnsemblFungi"/>
</dbReference>
<dbReference type="GO" id="GO:0050850">
    <property type="term" value="P:positive regulation of calcium-mediated signaling"/>
    <property type="evidence" value="ECO:0007669"/>
    <property type="project" value="EnsemblFungi"/>
</dbReference>
<dbReference type="GO" id="GO:0032995">
    <property type="term" value="P:regulation of fungal-type cell wall biogenesis"/>
    <property type="evidence" value="ECO:0007669"/>
    <property type="project" value="EnsemblFungi"/>
</dbReference>
<dbReference type="CDD" id="cd07857">
    <property type="entry name" value="STKc_MPK1"/>
    <property type="match status" value="1"/>
</dbReference>
<dbReference type="FunFam" id="1.10.510.10:FF:000013">
    <property type="entry name" value="Mitogen-activated protein kinase"/>
    <property type="match status" value="1"/>
</dbReference>
<dbReference type="FunFam" id="3.30.200.20:FF:000157">
    <property type="entry name" value="Mitogen-activated protein kinase"/>
    <property type="match status" value="1"/>
</dbReference>
<dbReference type="Gene3D" id="3.30.200.20">
    <property type="entry name" value="Phosphorylase Kinase, domain 1"/>
    <property type="match status" value="1"/>
</dbReference>
<dbReference type="Gene3D" id="1.10.510.10">
    <property type="entry name" value="Transferase(Phosphotransferase) domain 1"/>
    <property type="match status" value="1"/>
</dbReference>
<dbReference type="InterPro" id="IPR011009">
    <property type="entry name" value="Kinase-like_dom_sf"/>
</dbReference>
<dbReference type="InterPro" id="IPR050117">
    <property type="entry name" value="MAP_kinase"/>
</dbReference>
<dbReference type="InterPro" id="IPR003527">
    <property type="entry name" value="MAP_kinase_CS"/>
</dbReference>
<dbReference type="InterPro" id="IPR008352">
    <property type="entry name" value="MAPK_p38-like"/>
</dbReference>
<dbReference type="InterPro" id="IPR000719">
    <property type="entry name" value="Prot_kinase_dom"/>
</dbReference>
<dbReference type="InterPro" id="IPR017441">
    <property type="entry name" value="Protein_kinase_ATP_BS"/>
</dbReference>
<dbReference type="InterPro" id="IPR008271">
    <property type="entry name" value="Ser/Thr_kinase_AS"/>
</dbReference>
<dbReference type="PANTHER" id="PTHR24055">
    <property type="entry name" value="MITOGEN-ACTIVATED PROTEIN KINASE"/>
    <property type="match status" value="1"/>
</dbReference>
<dbReference type="Pfam" id="PF00069">
    <property type="entry name" value="Pkinase"/>
    <property type="match status" value="1"/>
</dbReference>
<dbReference type="PRINTS" id="PR01773">
    <property type="entry name" value="P38MAPKINASE"/>
</dbReference>
<dbReference type="SMART" id="SM00220">
    <property type="entry name" value="S_TKc"/>
    <property type="match status" value="1"/>
</dbReference>
<dbReference type="SUPFAM" id="SSF56112">
    <property type="entry name" value="Protein kinase-like (PK-like)"/>
    <property type="match status" value="1"/>
</dbReference>
<dbReference type="PROSITE" id="PS01351">
    <property type="entry name" value="MAPK"/>
    <property type="match status" value="1"/>
</dbReference>
<dbReference type="PROSITE" id="PS00107">
    <property type="entry name" value="PROTEIN_KINASE_ATP"/>
    <property type="match status" value="1"/>
</dbReference>
<dbReference type="PROSITE" id="PS50011">
    <property type="entry name" value="PROTEIN_KINASE_DOM"/>
    <property type="match status" value="1"/>
</dbReference>
<dbReference type="PROSITE" id="PS00108">
    <property type="entry name" value="PROTEIN_KINASE_ST"/>
    <property type="match status" value="1"/>
</dbReference>
<comment type="function">
    <text evidence="3">Mitogen-activated protein kinase, part of the mkh1-mkk1-spm1 MAPK cascade that regulates vegetative growth, conidial formation, colony surface hydrophobicity, osmotic stress, cell wall integrity maintenance, carbon and nitrogen source utilization, chitin distribution, septa formation, and pathogenicity.</text>
</comment>
<comment type="catalytic activity">
    <reaction evidence="6">
        <text>L-seryl-[protein] + ATP = O-phospho-L-seryl-[protein] + ADP + H(+)</text>
        <dbReference type="Rhea" id="RHEA:17989"/>
        <dbReference type="Rhea" id="RHEA-COMP:9863"/>
        <dbReference type="Rhea" id="RHEA-COMP:11604"/>
        <dbReference type="ChEBI" id="CHEBI:15378"/>
        <dbReference type="ChEBI" id="CHEBI:29999"/>
        <dbReference type="ChEBI" id="CHEBI:30616"/>
        <dbReference type="ChEBI" id="CHEBI:83421"/>
        <dbReference type="ChEBI" id="CHEBI:456216"/>
        <dbReference type="EC" id="2.7.11.24"/>
    </reaction>
    <physiologicalReaction direction="left-to-right" evidence="6">
        <dbReference type="Rhea" id="RHEA:17990"/>
    </physiologicalReaction>
</comment>
<comment type="catalytic activity">
    <reaction evidence="6">
        <text>L-threonyl-[protein] + ATP = O-phospho-L-threonyl-[protein] + ADP + H(+)</text>
        <dbReference type="Rhea" id="RHEA:46608"/>
        <dbReference type="Rhea" id="RHEA-COMP:11060"/>
        <dbReference type="Rhea" id="RHEA-COMP:11605"/>
        <dbReference type="ChEBI" id="CHEBI:15378"/>
        <dbReference type="ChEBI" id="CHEBI:30013"/>
        <dbReference type="ChEBI" id="CHEBI:30616"/>
        <dbReference type="ChEBI" id="CHEBI:61977"/>
        <dbReference type="ChEBI" id="CHEBI:456216"/>
        <dbReference type="EC" id="2.7.11.24"/>
    </reaction>
    <physiologicalReaction direction="left-to-right" evidence="6">
        <dbReference type="Rhea" id="RHEA:46609"/>
    </physiologicalReaction>
</comment>
<comment type="cofactor">
    <cofactor evidence="2">
        <name>Mg(2+)</name>
        <dbReference type="ChEBI" id="CHEBI:18420"/>
    </cofactor>
</comment>
<comment type="PTM">
    <text evidence="3">Phosphorylated by the MAP kinase kinase mkk1.</text>
</comment>
<comment type="disruption phenotype">
    <text evidence="3">Reduces the radial growth rate by approximately 31% and produces fewer conidia (PubMed:39631571). Inhibits significantly hyphal growth upon high osmotic stresses and in the presence of cell wall stress agents such as Congo red, calcofluor white or SDS (PubMed:39631571). Accumulates chitin at the hyphal tips (PubMed:39631571). Leads also to a looser distribution of spacers (PubMed:39631571). Finally, the size of lesions on apple fruits and branches shows a reduction of approximately 46% and 43%, respectively (PubMed:39631571).</text>
</comment>
<comment type="similarity">
    <text evidence="5">Belongs to the protein kinase superfamily. Ser/Thr protein kinase family. MAP kinase subfamily.</text>
</comment>
<keyword id="KW-0010">Activator</keyword>
<keyword id="KW-0067">ATP-binding</keyword>
<keyword id="KW-0183">Conidiation</keyword>
<keyword id="KW-0418">Kinase</keyword>
<keyword id="KW-0460">Magnesium</keyword>
<keyword id="KW-0547">Nucleotide-binding</keyword>
<keyword id="KW-1185">Reference proteome</keyword>
<keyword id="KW-0723">Serine/threonine-protein kinase</keyword>
<keyword id="KW-0749">Sporulation</keyword>
<keyword id="KW-0808">Transferase</keyword>
<keyword id="KW-0843">Virulence</keyword>
<protein>
    <recommendedName>
        <fullName evidence="4">Mitogen-activated protein kinase spm1</fullName>
        <shortName evidence="4">MAP kinase spm1</shortName>
        <shortName evidence="4">MAPK spm1</shortName>
        <ecNumber evidence="6">2.7.11.24</ecNumber>
    </recommendedName>
</protein>
<name>SPM1_CYTMA</name>